<protein>
    <recommendedName>
        <fullName evidence="1">Small ribosomal subunit protein uS11</fullName>
    </recommendedName>
    <alternativeName>
        <fullName evidence="2">30S ribosomal protein S11</fullName>
    </alternativeName>
</protein>
<proteinExistence type="inferred from homology"/>
<comment type="function">
    <text evidence="1">Located on the platform of the 30S subunit, it bridges several disparate RNA helices of the 16S rRNA. Forms part of the Shine-Dalgarno cleft in the 70S ribosome.</text>
</comment>
<comment type="subunit">
    <text evidence="1">Part of the 30S ribosomal subunit. Interacts with proteins S7 and S18. Binds to IF-3.</text>
</comment>
<comment type="similarity">
    <text evidence="1">Belongs to the universal ribosomal protein uS11 family.</text>
</comment>
<sequence length="129" mass="13785">MAKAPIRARKRVKKQVSDGVAHIHASFNNTIVTITDRQGNALGWATAGGSGFRGSRKSTPFAAQVAAERCAEAVKEYGIKNLEVVVKGPGPGRESTVRALNAAGFRITNITDVTPIPHNGCRPPKKRRV</sequence>
<reference key="1">
    <citation type="journal article" date="2006" name="Genome Res.">
        <title>Massive genome erosion and functional adaptations provide insights into the symbiotic lifestyle of Sodalis glossinidius in the tsetse host.</title>
        <authorList>
            <person name="Toh H."/>
            <person name="Weiss B.L."/>
            <person name="Perkin S.A.H."/>
            <person name="Yamashita A."/>
            <person name="Oshima K."/>
            <person name="Hattori M."/>
            <person name="Aksoy S."/>
        </authorList>
    </citation>
    <scope>NUCLEOTIDE SEQUENCE [LARGE SCALE GENOMIC DNA]</scope>
    <source>
        <strain>morsitans</strain>
    </source>
</reference>
<gene>
    <name evidence="1" type="primary">rpsK</name>
    <name type="ordered locus">SG2255</name>
</gene>
<dbReference type="EMBL" id="AP008232">
    <property type="protein sequence ID" value="BAE75530.1"/>
    <property type="molecule type" value="Genomic_DNA"/>
</dbReference>
<dbReference type="RefSeq" id="WP_011412066.1">
    <property type="nucleotide sequence ID" value="NC_007712.1"/>
</dbReference>
<dbReference type="SMR" id="Q2NQP5"/>
<dbReference type="STRING" id="343509.SG2255"/>
<dbReference type="KEGG" id="sgl:SG2255"/>
<dbReference type="eggNOG" id="COG0100">
    <property type="taxonomic scope" value="Bacteria"/>
</dbReference>
<dbReference type="HOGENOM" id="CLU_072439_5_0_6"/>
<dbReference type="OrthoDB" id="9806415at2"/>
<dbReference type="BioCyc" id="SGLO343509:SGP1_RS20730-MONOMER"/>
<dbReference type="Proteomes" id="UP000001932">
    <property type="component" value="Chromosome"/>
</dbReference>
<dbReference type="GO" id="GO:1990904">
    <property type="term" value="C:ribonucleoprotein complex"/>
    <property type="evidence" value="ECO:0007669"/>
    <property type="project" value="UniProtKB-KW"/>
</dbReference>
<dbReference type="GO" id="GO:0005840">
    <property type="term" value="C:ribosome"/>
    <property type="evidence" value="ECO:0007669"/>
    <property type="project" value="UniProtKB-KW"/>
</dbReference>
<dbReference type="GO" id="GO:0019843">
    <property type="term" value="F:rRNA binding"/>
    <property type="evidence" value="ECO:0007669"/>
    <property type="project" value="UniProtKB-UniRule"/>
</dbReference>
<dbReference type="GO" id="GO:0003735">
    <property type="term" value="F:structural constituent of ribosome"/>
    <property type="evidence" value="ECO:0007669"/>
    <property type="project" value="InterPro"/>
</dbReference>
<dbReference type="GO" id="GO:0006412">
    <property type="term" value="P:translation"/>
    <property type="evidence" value="ECO:0007669"/>
    <property type="project" value="UniProtKB-UniRule"/>
</dbReference>
<dbReference type="FunFam" id="3.30.420.80:FF:000001">
    <property type="entry name" value="30S ribosomal protein S11"/>
    <property type="match status" value="1"/>
</dbReference>
<dbReference type="Gene3D" id="3.30.420.80">
    <property type="entry name" value="Ribosomal protein S11"/>
    <property type="match status" value="1"/>
</dbReference>
<dbReference type="HAMAP" id="MF_01310">
    <property type="entry name" value="Ribosomal_uS11"/>
    <property type="match status" value="1"/>
</dbReference>
<dbReference type="InterPro" id="IPR001971">
    <property type="entry name" value="Ribosomal_uS11"/>
</dbReference>
<dbReference type="InterPro" id="IPR019981">
    <property type="entry name" value="Ribosomal_uS11_bac-type"/>
</dbReference>
<dbReference type="InterPro" id="IPR018102">
    <property type="entry name" value="Ribosomal_uS11_CS"/>
</dbReference>
<dbReference type="InterPro" id="IPR036967">
    <property type="entry name" value="Ribosomal_uS11_sf"/>
</dbReference>
<dbReference type="NCBIfam" id="NF003698">
    <property type="entry name" value="PRK05309.1"/>
    <property type="match status" value="1"/>
</dbReference>
<dbReference type="NCBIfam" id="TIGR03632">
    <property type="entry name" value="uS11_bact"/>
    <property type="match status" value="1"/>
</dbReference>
<dbReference type="PANTHER" id="PTHR11759">
    <property type="entry name" value="40S RIBOSOMAL PROTEIN S14/30S RIBOSOMAL PROTEIN S11"/>
    <property type="match status" value="1"/>
</dbReference>
<dbReference type="Pfam" id="PF00411">
    <property type="entry name" value="Ribosomal_S11"/>
    <property type="match status" value="1"/>
</dbReference>
<dbReference type="PIRSF" id="PIRSF002131">
    <property type="entry name" value="Ribosomal_S11"/>
    <property type="match status" value="1"/>
</dbReference>
<dbReference type="SUPFAM" id="SSF53137">
    <property type="entry name" value="Translational machinery components"/>
    <property type="match status" value="1"/>
</dbReference>
<dbReference type="PROSITE" id="PS00054">
    <property type="entry name" value="RIBOSOMAL_S11"/>
    <property type="match status" value="1"/>
</dbReference>
<accession>Q2NQP5</accession>
<feature type="chain" id="PRO_0000294858" description="Small ribosomal subunit protein uS11">
    <location>
        <begin position="1"/>
        <end position="129"/>
    </location>
</feature>
<name>RS11_SODGM</name>
<organism>
    <name type="scientific">Sodalis glossinidius (strain morsitans)</name>
    <dbReference type="NCBI Taxonomy" id="343509"/>
    <lineage>
        <taxon>Bacteria</taxon>
        <taxon>Pseudomonadati</taxon>
        <taxon>Pseudomonadota</taxon>
        <taxon>Gammaproteobacteria</taxon>
        <taxon>Enterobacterales</taxon>
        <taxon>Bruguierivoracaceae</taxon>
        <taxon>Sodalis</taxon>
    </lineage>
</organism>
<evidence type="ECO:0000255" key="1">
    <source>
        <dbReference type="HAMAP-Rule" id="MF_01310"/>
    </source>
</evidence>
<evidence type="ECO:0000305" key="2"/>
<keyword id="KW-0687">Ribonucleoprotein</keyword>
<keyword id="KW-0689">Ribosomal protein</keyword>
<keyword id="KW-0694">RNA-binding</keyword>
<keyword id="KW-0699">rRNA-binding</keyword>